<feature type="chain" id="PRO_0000290364" description="AP2-like ethylene-responsive transcription factor At2g41710">
    <location>
        <begin position="1"/>
        <end position="428"/>
    </location>
</feature>
<feature type="DNA-binding region" description="AP2/ERF" evidence="2">
    <location>
        <begin position="70"/>
        <end position="136"/>
    </location>
</feature>
<feature type="region of interest" description="Disordered" evidence="3">
    <location>
        <begin position="1"/>
        <end position="28"/>
    </location>
</feature>
<feature type="compositionally biased region" description="Polar residues" evidence="3">
    <location>
        <begin position="1"/>
        <end position="10"/>
    </location>
</feature>
<feature type="splice variant" id="VSP_026151" description="In isoform 2." evidence="4 5">
    <location>
        <begin position="162"/>
        <end position="166"/>
    </location>
</feature>
<feature type="sequence conflict" description="In Ref. 3; BAC43380." evidence="6" ref="3">
    <original>P</original>
    <variation>S</variation>
    <location>
        <position position="242"/>
    </location>
</feature>
<feature type="sequence conflict" description="In Ref. 5; AAM65663." evidence="6" ref="5">
    <original>C</original>
    <variation>R</variation>
    <location>
        <position position="283"/>
    </location>
</feature>
<feature type="sequence conflict" description="In Ref. 5; AAM65663." evidence="6" ref="5">
    <original>N</original>
    <variation>Y</variation>
    <location>
        <position position="342"/>
    </location>
</feature>
<protein>
    <recommendedName>
        <fullName>AP2-like ethylene-responsive transcription factor At2g41710</fullName>
    </recommendedName>
</protein>
<organism>
    <name type="scientific">Arabidopsis thaliana</name>
    <name type="common">Mouse-ear cress</name>
    <dbReference type="NCBI Taxonomy" id="3702"/>
    <lineage>
        <taxon>Eukaryota</taxon>
        <taxon>Viridiplantae</taxon>
        <taxon>Streptophyta</taxon>
        <taxon>Embryophyta</taxon>
        <taxon>Tracheophyta</taxon>
        <taxon>Spermatophyta</taxon>
        <taxon>Magnoliopsida</taxon>
        <taxon>eudicotyledons</taxon>
        <taxon>Gunneridae</taxon>
        <taxon>Pentapetalae</taxon>
        <taxon>rosids</taxon>
        <taxon>malvids</taxon>
        <taxon>Brassicales</taxon>
        <taxon>Brassicaceae</taxon>
        <taxon>Camelineae</taxon>
        <taxon>Arabidopsis</taxon>
    </lineage>
</organism>
<keyword id="KW-0010">Activator</keyword>
<keyword id="KW-0025">Alternative splicing</keyword>
<keyword id="KW-0238">DNA-binding</keyword>
<keyword id="KW-0936">Ethylene signaling pathway</keyword>
<keyword id="KW-0539">Nucleus</keyword>
<keyword id="KW-1185">Reference proteome</keyword>
<keyword id="KW-0804">Transcription</keyword>
<keyword id="KW-0805">Transcription regulation</keyword>
<proteinExistence type="evidence at protein level"/>
<reference key="1">
    <citation type="journal article" date="1999" name="Nature">
        <title>Sequence and analysis of chromosome 2 of the plant Arabidopsis thaliana.</title>
        <authorList>
            <person name="Lin X."/>
            <person name="Kaul S."/>
            <person name="Rounsley S.D."/>
            <person name="Shea T.P."/>
            <person name="Benito M.-I."/>
            <person name="Town C.D."/>
            <person name="Fujii C.Y."/>
            <person name="Mason T.M."/>
            <person name="Bowman C.L."/>
            <person name="Barnstead M.E."/>
            <person name="Feldblyum T.V."/>
            <person name="Buell C.R."/>
            <person name="Ketchum K.A."/>
            <person name="Lee J.J."/>
            <person name="Ronning C.M."/>
            <person name="Koo H.L."/>
            <person name="Moffat K.S."/>
            <person name="Cronin L.A."/>
            <person name="Shen M."/>
            <person name="Pai G."/>
            <person name="Van Aken S."/>
            <person name="Umayam L."/>
            <person name="Tallon L.J."/>
            <person name="Gill J.E."/>
            <person name="Adams M.D."/>
            <person name="Carrera A.J."/>
            <person name="Creasy T.H."/>
            <person name="Goodman H.M."/>
            <person name="Somerville C.R."/>
            <person name="Copenhaver G.P."/>
            <person name="Preuss D."/>
            <person name="Nierman W.C."/>
            <person name="White O."/>
            <person name="Eisen J.A."/>
            <person name="Salzberg S.L."/>
            <person name="Fraser C.M."/>
            <person name="Venter J.C."/>
        </authorList>
    </citation>
    <scope>NUCLEOTIDE SEQUENCE [LARGE SCALE GENOMIC DNA]</scope>
    <source>
        <strain>cv. Columbia</strain>
    </source>
</reference>
<reference key="2">
    <citation type="journal article" date="2017" name="Plant J.">
        <title>Araport11: a complete reannotation of the Arabidopsis thaliana reference genome.</title>
        <authorList>
            <person name="Cheng C.Y."/>
            <person name="Krishnakumar V."/>
            <person name="Chan A.P."/>
            <person name="Thibaud-Nissen F."/>
            <person name="Schobel S."/>
            <person name="Town C.D."/>
        </authorList>
    </citation>
    <scope>GENOME REANNOTATION</scope>
    <source>
        <strain>cv. Columbia</strain>
    </source>
</reference>
<reference key="3">
    <citation type="journal article" date="2002" name="Science">
        <title>Functional annotation of a full-length Arabidopsis cDNA collection.</title>
        <authorList>
            <person name="Seki M."/>
            <person name="Narusaka M."/>
            <person name="Kamiya A."/>
            <person name="Ishida J."/>
            <person name="Satou M."/>
            <person name="Sakurai T."/>
            <person name="Nakajima M."/>
            <person name="Enju A."/>
            <person name="Akiyama K."/>
            <person name="Oono Y."/>
            <person name="Muramatsu M."/>
            <person name="Hayashizaki Y."/>
            <person name="Kawai J."/>
            <person name="Carninci P."/>
            <person name="Itoh M."/>
            <person name="Ishii Y."/>
            <person name="Arakawa T."/>
            <person name="Shibata K."/>
            <person name="Shinagawa A."/>
            <person name="Shinozaki K."/>
        </authorList>
    </citation>
    <scope>NUCLEOTIDE SEQUENCE [LARGE SCALE MRNA] (ISOFORM 1)</scope>
    <source>
        <strain>cv. Columbia</strain>
    </source>
</reference>
<reference key="4">
    <citation type="submission" date="2006-06" db="EMBL/GenBank/DDBJ databases">
        <title>Arabidopsis ORF clones.</title>
        <authorList>
            <person name="Shinn P."/>
            <person name="Chen H."/>
            <person name="Kim C.J."/>
            <person name="Quinitio C."/>
            <person name="Ecker J.R."/>
        </authorList>
    </citation>
    <scope>NUCLEOTIDE SEQUENCE [LARGE SCALE MRNA] (ISOFORM 2)</scope>
    <source>
        <strain>cv. Columbia</strain>
    </source>
</reference>
<reference key="5">
    <citation type="submission" date="2002-03" db="EMBL/GenBank/DDBJ databases">
        <title>Full-length cDNA from Arabidopsis thaliana.</title>
        <authorList>
            <person name="Brover V.V."/>
            <person name="Troukhan M.E."/>
            <person name="Alexandrov N.A."/>
            <person name="Lu Y.-P."/>
            <person name="Flavell R.B."/>
            <person name="Feldmann K.A."/>
        </authorList>
    </citation>
    <scope>NUCLEOTIDE SEQUENCE [LARGE SCALE MRNA] (ISOFORM 2)</scope>
</reference>
<reference key="6">
    <citation type="journal article" date="2006" name="Plant Physiol.">
        <title>Genome-wide analysis of the ERF gene family in Arabidopsis and rice.</title>
        <authorList>
            <person name="Nakano T."/>
            <person name="Suzuki K."/>
            <person name="Fujimura T."/>
            <person name="Shinshi H."/>
        </authorList>
    </citation>
    <scope>GENE FAMILY</scope>
    <scope>NOMENCLATURE</scope>
</reference>
<accession>Q8GWK2</accession>
<accession>O22949</accession>
<accession>Q8LA00</accession>
<comment type="function">
    <text evidence="1">Probably acts as a transcriptional activator. Binds to the GCC-box pathogenesis-related promoter element. May be involved in the regulation of gene expression by stress factors and by components of stress signal transduction pathways (By similarity).</text>
</comment>
<comment type="interaction">
    <interactant intactId="EBI-25521547">
        <id>Q8GWK2</id>
    </interactant>
    <interactant intactId="EBI-4425567">
        <id>Q8GWR1</id>
        <label>AAAS</label>
    </interactant>
    <organismsDiffer>false</organismsDiffer>
    <experiments>3</experiments>
</comment>
<comment type="interaction">
    <interactant intactId="EBI-25521547">
        <id>Q8GWK2</id>
    </interactant>
    <interactant intactId="EBI-965964">
        <id>O64644</id>
        <label>At2g45640</label>
    </interactant>
    <organismsDiffer>false</organismsDiffer>
    <experiments>3</experiments>
</comment>
<comment type="subcellular location">
    <subcellularLocation>
        <location evidence="6">Nucleus</location>
    </subcellularLocation>
</comment>
<comment type="alternative products">
    <event type="alternative splicing"/>
    <isoform>
        <id>Q8GWK2-1</id>
        <name>1</name>
        <sequence type="displayed"/>
    </isoform>
    <isoform>
        <id>Q8GWK2-2</id>
        <name>2</name>
        <sequence type="described" ref="VSP_026151"/>
    </isoform>
</comment>
<comment type="miscellaneous">
    <molecule>Isoform 2</molecule>
    <text evidence="6">May be due to a competing acceptor splice site.</text>
</comment>
<comment type="similarity">
    <text evidence="6">Belongs to the AP2/ERF transcription factor family. AP2 subfamily.</text>
</comment>
<comment type="sequence caution" evidence="6">
    <conflict type="erroneous gene model prediction">
        <sequence resource="EMBL-CDS" id="AAC02777"/>
    </conflict>
</comment>
<dbReference type="EMBL" id="AC002339">
    <property type="protein sequence ID" value="AAC02777.2"/>
    <property type="status" value="ALT_SEQ"/>
    <property type="molecule type" value="Genomic_DNA"/>
</dbReference>
<dbReference type="EMBL" id="CP002685">
    <property type="protein sequence ID" value="AEC10021.1"/>
    <property type="molecule type" value="Genomic_DNA"/>
</dbReference>
<dbReference type="EMBL" id="CP002685">
    <property type="protein sequence ID" value="AEC10022.1"/>
    <property type="molecule type" value="Genomic_DNA"/>
</dbReference>
<dbReference type="EMBL" id="AK118789">
    <property type="protein sequence ID" value="BAC43380.1"/>
    <property type="molecule type" value="mRNA"/>
</dbReference>
<dbReference type="EMBL" id="BT025985">
    <property type="protein sequence ID" value="ABG25074.1"/>
    <property type="molecule type" value="mRNA"/>
</dbReference>
<dbReference type="EMBL" id="AY088118">
    <property type="protein sequence ID" value="AAM65663.1"/>
    <property type="molecule type" value="mRNA"/>
</dbReference>
<dbReference type="PIR" id="B84845">
    <property type="entry name" value="B84845"/>
</dbReference>
<dbReference type="RefSeq" id="NP_565957.1">
    <molecule id="Q8GWK2-2"/>
    <property type="nucleotide sequence ID" value="NM_129735.3"/>
</dbReference>
<dbReference type="RefSeq" id="NP_850355.1">
    <molecule id="Q8GWK2-1"/>
    <property type="nucleotide sequence ID" value="NM_180024.2"/>
</dbReference>
<dbReference type="SMR" id="Q8GWK2"/>
<dbReference type="BioGRID" id="4107">
    <property type="interactions" value="2"/>
</dbReference>
<dbReference type="FunCoup" id="Q8GWK2">
    <property type="interactions" value="1282"/>
</dbReference>
<dbReference type="IntAct" id="Q8GWK2">
    <property type="interactions" value="2"/>
</dbReference>
<dbReference type="STRING" id="3702.Q8GWK2"/>
<dbReference type="PaxDb" id="3702-AT2G41710.3"/>
<dbReference type="ProteomicsDB" id="244960">
    <molecule id="Q8GWK2-1"/>
</dbReference>
<dbReference type="EnsemblPlants" id="AT2G41710.1">
    <molecule id="Q8GWK2-2"/>
    <property type="protein sequence ID" value="AT2G41710.1"/>
    <property type="gene ID" value="AT2G41710"/>
</dbReference>
<dbReference type="EnsemblPlants" id="AT2G41710.2">
    <molecule id="Q8GWK2-1"/>
    <property type="protein sequence ID" value="AT2G41710.2"/>
    <property type="gene ID" value="AT2G41710"/>
</dbReference>
<dbReference type="GeneID" id="818770"/>
<dbReference type="Gramene" id="AT2G41710.1">
    <molecule id="Q8GWK2-2"/>
    <property type="protein sequence ID" value="AT2G41710.1"/>
    <property type="gene ID" value="AT2G41710"/>
</dbReference>
<dbReference type="Gramene" id="AT2G41710.2">
    <molecule id="Q8GWK2-1"/>
    <property type="protein sequence ID" value="AT2G41710.2"/>
    <property type="gene ID" value="AT2G41710"/>
</dbReference>
<dbReference type="KEGG" id="ath:AT2G41710"/>
<dbReference type="Araport" id="AT2G41710"/>
<dbReference type="TAIR" id="AT2G41710"/>
<dbReference type="eggNOG" id="ENOG502QR8V">
    <property type="taxonomic scope" value="Eukaryota"/>
</dbReference>
<dbReference type="HOGENOM" id="CLU_041859_0_0_1"/>
<dbReference type="InParanoid" id="Q8GWK2"/>
<dbReference type="OMA" id="TINKMDH"/>
<dbReference type="PhylomeDB" id="Q8GWK2"/>
<dbReference type="PRO" id="PR:Q8GWK2"/>
<dbReference type="Proteomes" id="UP000006548">
    <property type="component" value="Chromosome 2"/>
</dbReference>
<dbReference type="ExpressionAtlas" id="Q8GWK2">
    <property type="expression patterns" value="baseline and differential"/>
</dbReference>
<dbReference type="GO" id="GO:0005634">
    <property type="term" value="C:nucleus"/>
    <property type="evidence" value="ECO:0007669"/>
    <property type="project" value="UniProtKB-SubCell"/>
</dbReference>
<dbReference type="GO" id="GO:0003677">
    <property type="term" value="F:DNA binding"/>
    <property type="evidence" value="ECO:0007669"/>
    <property type="project" value="UniProtKB-KW"/>
</dbReference>
<dbReference type="GO" id="GO:0003700">
    <property type="term" value="F:DNA-binding transcription factor activity"/>
    <property type="evidence" value="ECO:0007669"/>
    <property type="project" value="InterPro"/>
</dbReference>
<dbReference type="GO" id="GO:0009873">
    <property type="term" value="P:ethylene-activated signaling pathway"/>
    <property type="evidence" value="ECO:0007669"/>
    <property type="project" value="UniProtKB-KW"/>
</dbReference>
<dbReference type="FunFam" id="3.30.730.10:FF:000004">
    <property type="entry name" value="AP2-like ethylene-responsive transcription factor"/>
    <property type="match status" value="1"/>
</dbReference>
<dbReference type="Gene3D" id="3.30.730.10">
    <property type="entry name" value="AP2/ERF domain"/>
    <property type="match status" value="1"/>
</dbReference>
<dbReference type="InterPro" id="IPR001471">
    <property type="entry name" value="AP2/ERF_dom"/>
</dbReference>
<dbReference type="InterPro" id="IPR036955">
    <property type="entry name" value="AP2/ERF_dom_sf"/>
</dbReference>
<dbReference type="InterPro" id="IPR016177">
    <property type="entry name" value="DNA-bd_dom_sf"/>
</dbReference>
<dbReference type="PANTHER" id="PTHR32467">
    <property type="entry name" value="AP2-LIKE ETHYLENE-RESPONSIVE TRANSCRIPTION FACTOR"/>
    <property type="match status" value="1"/>
</dbReference>
<dbReference type="PANTHER" id="PTHR32467:SF32">
    <property type="entry name" value="AP2-LIKE ETHYLENE-RESPONSIVE TRANSCRIPTION FACTOR SMOS1"/>
    <property type="match status" value="1"/>
</dbReference>
<dbReference type="Pfam" id="PF00847">
    <property type="entry name" value="AP2"/>
    <property type="match status" value="1"/>
</dbReference>
<dbReference type="PRINTS" id="PR00367">
    <property type="entry name" value="ETHRSPELEMNT"/>
</dbReference>
<dbReference type="SMART" id="SM00380">
    <property type="entry name" value="AP2"/>
    <property type="match status" value="1"/>
</dbReference>
<dbReference type="SUPFAM" id="SSF54171">
    <property type="entry name" value="DNA-binding domain"/>
    <property type="match status" value="1"/>
</dbReference>
<dbReference type="PROSITE" id="PS51032">
    <property type="entry name" value="AP2_ERF"/>
    <property type="match status" value="1"/>
</dbReference>
<name>AP2L4_ARATH</name>
<sequence>MASVSSSDQGPKTEAGCSGGGGGESSETVAASDQMLLYRGFKKAKKERGCTAKERISKMPPCTAGKRSSIYRGVTRHRWTGRYEAHLWDKSTWNQNQNKKGKQVYLGAYDDEEAAARAYDLAALKYWGPGTLINFPVTDYTRDLEEMQNLSREEYLASLRRYPFGRKSSGFSRGIAKYRGLQSRWDASASRMPGPEYFSNIHYGAGDDRGTEGDFLGSFCLERKIDLTGYIKWWGANKNRQPESSSKASEDANVEDAGTELKTLEHTSHATEPYKAPNLGVLCGTQRKEKEISSPSSSSALSILSQSPAFKSLEEKVLKIQESCNNENDENANRNIINMEKNNGKAIEKPVVSHGVALGGAAALSLQKSMYPLTSLLTAPLLTNYNTLDPLADPILWTPFLPSGSSLTSEVTKTETSCSTYSYLPQEK</sequence>
<gene>
    <name type="ordered locus">At2g41710</name>
    <name type="ORF">T11A7.19</name>
</gene>
<evidence type="ECO:0000250" key="1"/>
<evidence type="ECO:0000255" key="2">
    <source>
        <dbReference type="PROSITE-ProRule" id="PRU00366"/>
    </source>
</evidence>
<evidence type="ECO:0000256" key="3">
    <source>
        <dbReference type="SAM" id="MobiDB-lite"/>
    </source>
</evidence>
<evidence type="ECO:0000303" key="4">
    <source ref="4"/>
</evidence>
<evidence type="ECO:0000303" key="5">
    <source ref="5"/>
</evidence>
<evidence type="ECO:0000305" key="6"/>